<comment type="function">
    <text evidence="5">May have a ubiquitin-protein ligase activity acting as an E3 ubiquitin-protein ligase or as a ubiquitin-ubiquitin ligase promoting elongation of ubiquitin chains on substrates.</text>
</comment>
<comment type="catalytic activity">
    <reaction evidence="5">
        <text>S-ubiquitinyl-[E2 ubiquitin-conjugating enzyme]-L-cysteine + [acceptor protein]-L-lysine = [E2 ubiquitin-conjugating enzyme]-L-cysteine + N(6)-ubiquitinyl-[acceptor protein]-L-lysine.</text>
        <dbReference type="EC" id="2.3.2.27"/>
    </reaction>
</comment>
<comment type="pathway">
    <text evidence="5">Protein modification; protein ubiquitination.</text>
</comment>
<comment type="subunit">
    <text evidence="4 6">Interacts with UBE2L3. Interacts with VCP.</text>
</comment>
<comment type="subcellular location">
    <subcellularLocation>
        <location evidence="5">Nucleus</location>
    </subcellularLocation>
    <text evidence="1">Enriched in nuclear bodies.</text>
</comment>
<comment type="tissue specificity">
    <text evidence="4">Expressed in testis and placenta.</text>
</comment>
<comment type="developmental stage">
    <text evidence="4">Expressed in embryos at 14.5 dpc.</text>
</comment>
<comment type="domain">
    <text evidence="1 5">The U-box domain mediates interaction with E2 ubiquitin ligases and is required for the ubiquitin-protein ligase activity.</text>
</comment>
<sequence length="539" mass="58732">MVVNLCLPQFRPRIHCNKVSADGYEVENLISEDLIKRSHGFRTEYFIRPPIYVTVSFPFNVEICRVNIDLTTGGYQNVSGLELYTSALSSRVSQDAQDCWTTGPVETSVPDKEAFTLVGKVLLKNQNHVVFSHRGFKARPPFSPMEVTLLSPAVVAQELWNKGALSLSHVAHLKIGITHVTGSGISCIKRLEVWGQPARTCSQEVINSVLLIASESLPQDLDLHAPALPMESDCDPGGQSESQHSPCTLQDMSEVESDVPEEFLDPITLEIMPCPMLLPSGKVIDQSTLEKCNLSEAAWGRVPSDPFTGLAFTPQSQPLPHPSLKARIDRFLLQHSISGCRLLGRAQTPSAMTPSVITLPSRKRKTEQAEHSSHYSLGMSASSSATSPLFSPTTSEPTAKKMKATSELGLTDMDCSAGPVSHEQKLAQSLEIALTSTLGSMPSFTARLTKGQLQLGTRGSSACRRPASSSEHPRSVSGPECASCKQAFSSYSTNEPVYQLPCGHLLCRPCLSEKQRSQPMMCTACRQPVTSQDVLRVHF</sequence>
<evidence type="ECO:0000250" key="1">
    <source>
        <dbReference type="UniProtKB" id="O94941"/>
    </source>
</evidence>
<evidence type="ECO:0000255" key="2">
    <source>
        <dbReference type="PROSITE-ProRule" id="PRU00175"/>
    </source>
</evidence>
<evidence type="ECO:0000256" key="3">
    <source>
        <dbReference type="SAM" id="MobiDB-lite"/>
    </source>
</evidence>
<evidence type="ECO:0000269" key="4">
    <source>
    </source>
</evidence>
<evidence type="ECO:0000269" key="5">
    <source>
    </source>
</evidence>
<evidence type="ECO:0000269" key="6">
    <source>
    </source>
</evidence>
<evidence type="ECO:0000303" key="7">
    <source>
    </source>
</evidence>
<evidence type="ECO:0000305" key="8"/>
<evidence type="ECO:0000312" key="9">
    <source>
        <dbReference type="MGI" id="MGI:2154658"/>
    </source>
</evidence>
<accession>Q925F4</accession>
<gene>
    <name type="primary">Ubox5</name>
    <name evidence="8" type="synonym">Rnf37</name>
    <name evidence="7" type="synonym">Uip5</name>
</gene>
<name>RNF37_MOUSE</name>
<feature type="chain" id="PRO_0000056077" description="RING finger protein 37">
    <location>
        <begin position="1"/>
        <end position="539"/>
    </location>
</feature>
<feature type="domain" description="U-box">
    <location>
        <begin position="258"/>
        <end position="338"/>
    </location>
</feature>
<feature type="zinc finger region" description="RING-type" evidence="2">
    <location>
        <begin position="481"/>
        <end position="526"/>
    </location>
</feature>
<feature type="region of interest" description="Disordered" evidence="3">
    <location>
        <begin position="226"/>
        <end position="249"/>
    </location>
</feature>
<feature type="region of interest" description="Disordered" evidence="3">
    <location>
        <begin position="359"/>
        <end position="399"/>
    </location>
</feature>
<feature type="region of interest" description="Disordered" evidence="3">
    <location>
        <begin position="456"/>
        <end position="479"/>
    </location>
</feature>
<feature type="compositionally biased region" description="Polar residues" evidence="3">
    <location>
        <begin position="239"/>
        <end position="249"/>
    </location>
</feature>
<feature type="compositionally biased region" description="Low complexity" evidence="3">
    <location>
        <begin position="374"/>
        <end position="395"/>
    </location>
</feature>
<feature type="mutagenesis site" description="No effect on E3 ubiquitin-protein ligase activity." evidence="5">
    <original>C</original>
    <variation>A</variation>
    <location>
        <position position="292"/>
    </location>
</feature>
<feature type="mutagenesis site" description="Loss of E3 ubiquitin-protein ligase activity." evidence="5">
    <original>P</original>
    <variation>A</variation>
    <location>
        <position position="306"/>
    </location>
</feature>
<feature type="sequence conflict" description="In Ref. 2; AAH25068." evidence="8" ref="2">
    <original>Y</original>
    <variation>C</variation>
    <location>
        <position position="75"/>
    </location>
</feature>
<organism>
    <name type="scientific">Mus musculus</name>
    <name type="common">Mouse</name>
    <dbReference type="NCBI Taxonomy" id="10090"/>
    <lineage>
        <taxon>Eukaryota</taxon>
        <taxon>Metazoa</taxon>
        <taxon>Chordata</taxon>
        <taxon>Craniata</taxon>
        <taxon>Vertebrata</taxon>
        <taxon>Euteleostomi</taxon>
        <taxon>Mammalia</taxon>
        <taxon>Eutheria</taxon>
        <taxon>Euarchontoglires</taxon>
        <taxon>Glires</taxon>
        <taxon>Rodentia</taxon>
        <taxon>Myomorpha</taxon>
        <taxon>Muroidea</taxon>
        <taxon>Muridae</taxon>
        <taxon>Murinae</taxon>
        <taxon>Mus</taxon>
        <taxon>Mus</taxon>
    </lineage>
</organism>
<keyword id="KW-0479">Metal-binding</keyword>
<keyword id="KW-0539">Nucleus</keyword>
<keyword id="KW-1185">Reference proteome</keyword>
<keyword id="KW-0808">Transferase</keyword>
<keyword id="KW-0833">Ubl conjugation pathway</keyword>
<keyword id="KW-0862">Zinc</keyword>
<keyword id="KW-0863">Zinc-finger</keyword>
<proteinExistence type="evidence at protein level"/>
<protein>
    <recommendedName>
        <fullName evidence="8">RING finger protein 37</fullName>
        <ecNumber evidence="5">2.3.2.27</ecNumber>
    </recommendedName>
    <alternativeName>
        <fullName evidence="8">RING-type E3 ubiquitin transferase RNF37</fullName>
    </alternativeName>
    <alternativeName>
        <fullName evidence="9">U-box domain-containing protein 5</fullName>
    </alternativeName>
    <alternativeName>
        <fullName evidence="7">UbcM4-interacting protein 5</fullName>
    </alternativeName>
</protein>
<reference key="1">
    <citation type="journal article" date="2001" name="J. Biol. Chem.">
        <title>Interaction of the RING finger-related U-box motif of a nuclear dot protein with ubiquitin-conjugating enzymes.</title>
        <authorList>
            <person name="Pringa E."/>
            <person name="Martinez-Noel G."/>
            <person name="Muller U."/>
            <person name="Harbers K."/>
        </authorList>
    </citation>
    <scope>NUCLEOTIDE SEQUENCE [MRNA]</scope>
    <scope>INTERACTION WITH UBE2L3</scope>
    <scope>TISSUE SPECIFICITY</scope>
    <scope>DEVELOPMENTAL STAGE</scope>
</reference>
<reference key="2">
    <citation type="journal article" date="2004" name="Genome Res.">
        <title>The status, quality, and expansion of the NIH full-length cDNA project: the Mammalian Gene Collection (MGC).</title>
        <authorList>
            <consortium name="The MGC Project Team"/>
        </authorList>
    </citation>
    <scope>NUCLEOTIDE SEQUENCE [LARGE SCALE MRNA]</scope>
    <source>
        <tissue>Kidney</tissue>
    </source>
</reference>
<reference key="3">
    <citation type="journal article" date="2001" name="J. Biol. Chem.">
        <title>U box proteins as a new family of ubiquitin-protein ligases.</title>
        <authorList>
            <person name="Hatakeyama S."/>
            <person name="Yada M."/>
            <person name="Matsumoto M."/>
            <person name="Ishida N."/>
            <person name="Nakayama K.I."/>
        </authorList>
    </citation>
    <scope>FUNCTION</scope>
    <scope>CATALYTIC ACTIVITY</scope>
    <scope>PATHWAY</scope>
    <scope>SUBCELLULAR LOCATION</scope>
    <scope>DOMAIN</scope>
    <scope>MUTAGENESIS OF CYS-292 AND PRO-306</scope>
</reference>
<reference key="4">
    <citation type="journal article" date="2004" name="Genes Cells">
        <title>Interaction of U-box-type ubiquitin-protein ligases (E3s) with molecular chaperones.</title>
        <authorList>
            <person name="Hatakeyama S."/>
            <person name="Matsumoto M."/>
            <person name="Yada M."/>
            <person name="Nakayama K.I."/>
        </authorList>
    </citation>
    <scope>INTERACTION WITH VCP</scope>
</reference>
<dbReference type="EC" id="2.3.2.27" evidence="5"/>
<dbReference type="EMBL" id="AF360997">
    <property type="protein sequence ID" value="AAK51467.1"/>
    <property type="molecule type" value="mRNA"/>
</dbReference>
<dbReference type="EMBL" id="BC025068">
    <property type="protein sequence ID" value="AAH25068.1"/>
    <property type="molecule type" value="mRNA"/>
</dbReference>
<dbReference type="CCDS" id="CCDS16747.1"/>
<dbReference type="RefSeq" id="NP_001242922.1">
    <property type="nucleotide sequence ID" value="NM_001255993.1"/>
</dbReference>
<dbReference type="RefSeq" id="NP_001242923.1">
    <property type="nucleotide sequence ID" value="NM_001255994.1"/>
</dbReference>
<dbReference type="RefSeq" id="NP_542129.2">
    <property type="nucleotide sequence ID" value="NM_080562.5"/>
</dbReference>
<dbReference type="SMR" id="Q925F4"/>
<dbReference type="BioGRID" id="228291">
    <property type="interactions" value="7"/>
</dbReference>
<dbReference type="FunCoup" id="Q925F4">
    <property type="interactions" value="2433"/>
</dbReference>
<dbReference type="STRING" id="10090.ENSMUSP00000028761"/>
<dbReference type="GlyGen" id="Q925F4">
    <property type="glycosylation" value="1 site"/>
</dbReference>
<dbReference type="PhosphoSitePlus" id="Q925F4"/>
<dbReference type="PaxDb" id="10090-ENSMUSP00000028761"/>
<dbReference type="ProteomicsDB" id="300501"/>
<dbReference type="Antibodypedia" id="23444">
    <property type="antibodies" value="208 antibodies from 21 providers"/>
</dbReference>
<dbReference type="DNASU" id="140629"/>
<dbReference type="Ensembl" id="ENSMUST00000028761.5">
    <property type="protein sequence ID" value="ENSMUSP00000028761.5"/>
    <property type="gene ID" value="ENSMUSG00000027300.11"/>
</dbReference>
<dbReference type="GeneID" id="140629"/>
<dbReference type="KEGG" id="mmu:140629"/>
<dbReference type="UCSC" id="uc008mji.3">
    <property type="organism name" value="mouse"/>
</dbReference>
<dbReference type="AGR" id="MGI:2154658"/>
<dbReference type="CTD" id="22888"/>
<dbReference type="MGI" id="MGI:2154658">
    <property type="gene designation" value="Ubox5"/>
</dbReference>
<dbReference type="VEuPathDB" id="HostDB:ENSMUSG00000027300"/>
<dbReference type="eggNOG" id="KOG2042">
    <property type="taxonomic scope" value="Eukaryota"/>
</dbReference>
<dbReference type="GeneTree" id="ENSGT00510000049555"/>
<dbReference type="HOGENOM" id="CLU_038691_0_0_1"/>
<dbReference type="InParanoid" id="Q925F4"/>
<dbReference type="OMA" id="FKKEPMY"/>
<dbReference type="OrthoDB" id="20295at2759"/>
<dbReference type="PhylomeDB" id="Q925F4"/>
<dbReference type="TreeFam" id="TF329105"/>
<dbReference type="Reactome" id="R-MMU-983168">
    <property type="pathway name" value="Antigen processing: Ubiquitination &amp; Proteasome degradation"/>
</dbReference>
<dbReference type="UniPathway" id="UPA00143"/>
<dbReference type="BioGRID-ORCS" id="140629">
    <property type="hits" value="4 hits in 77 CRISPR screens"/>
</dbReference>
<dbReference type="ChiTaRS" id="Ubox5">
    <property type="organism name" value="mouse"/>
</dbReference>
<dbReference type="PRO" id="PR:Q925F4"/>
<dbReference type="Proteomes" id="UP000000589">
    <property type="component" value="Chromosome 2"/>
</dbReference>
<dbReference type="RNAct" id="Q925F4">
    <property type="molecule type" value="protein"/>
</dbReference>
<dbReference type="Bgee" id="ENSMUSG00000027300">
    <property type="expression patterns" value="Expressed in ureteric bud trunk and 234 other cell types or tissues"/>
</dbReference>
<dbReference type="ExpressionAtlas" id="Q925F4">
    <property type="expression patterns" value="baseline and differential"/>
</dbReference>
<dbReference type="GO" id="GO:0005925">
    <property type="term" value="C:focal adhesion"/>
    <property type="evidence" value="ECO:0007669"/>
    <property type="project" value="Ensembl"/>
</dbReference>
<dbReference type="GO" id="GO:0016604">
    <property type="term" value="C:nuclear body"/>
    <property type="evidence" value="ECO:0000250"/>
    <property type="project" value="UniProtKB"/>
</dbReference>
<dbReference type="GO" id="GO:0005634">
    <property type="term" value="C:nucleus"/>
    <property type="evidence" value="ECO:0000314"/>
    <property type="project" value="MGI"/>
</dbReference>
<dbReference type="GO" id="GO:0061630">
    <property type="term" value="F:ubiquitin protein ligase activity"/>
    <property type="evidence" value="ECO:0000314"/>
    <property type="project" value="MGI"/>
</dbReference>
<dbReference type="GO" id="GO:0031625">
    <property type="term" value="F:ubiquitin protein ligase binding"/>
    <property type="evidence" value="ECO:0000353"/>
    <property type="project" value="UniProtKB"/>
</dbReference>
<dbReference type="GO" id="GO:0034450">
    <property type="term" value="F:ubiquitin-ubiquitin ligase activity"/>
    <property type="evidence" value="ECO:0000314"/>
    <property type="project" value="MGI"/>
</dbReference>
<dbReference type="GO" id="GO:0008270">
    <property type="term" value="F:zinc ion binding"/>
    <property type="evidence" value="ECO:0007669"/>
    <property type="project" value="UniProtKB-KW"/>
</dbReference>
<dbReference type="GO" id="GO:0000209">
    <property type="term" value="P:protein polyubiquitination"/>
    <property type="evidence" value="ECO:0000314"/>
    <property type="project" value="MGI"/>
</dbReference>
<dbReference type="CDD" id="cd16660">
    <property type="entry name" value="RING-Ubox_RNF37"/>
    <property type="match status" value="1"/>
</dbReference>
<dbReference type="FunFam" id="3.30.40.10:FF:000163">
    <property type="entry name" value="Putative ring finger protein 37"/>
    <property type="match status" value="1"/>
</dbReference>
<dbReference type="FunFam" id="3.30.40.10:FF:000481">
    <property type="entry name" value="U-box domain containing 5"/>
    <property type="match status" value="1"/>
</dbReference>
<dbReference type="Gene3D" id="3.30.40.10">
    <property type="entry name" value="Zinc/RING finger domain, C3HC4 (zinc finger)"/>
    <property type="match status" value="2"/>
</dbReference>
<dbReference type="InterPro" id="IPR039925">
    <property type="entry name" value="RNF37_RING-Ubox"/>
</dbReference>
<dbReference type="InterPro" id="IPR039847">
    <property type="entry name" value="Ubox5"/>
</dbReference>
<dbReference type="InterPro" id="IPR045696">
    <property type="entry name" value="Ubox5_N"/>
</dbReference>
<dbReference type="InterPro" id="IPR003613">
    <property type="entry name" value="Ubox_domain"/>
</dbReference>
<dbReference type="InterPro" id="IPR001841">
    <property type="entry name" value="Znf_RING"/>
</dbReference>
<dbReference type="InterPro" id="IPR013083">
    <property type="entry name" value="Znf_RING/FYVE/PHD"/>
</dbReference>
<dbReference type="InterPro" id="IPR017907">
    <property type="entry name" value="Znf_RING_CS"/>
</dbReference>
<dbReference type="PANTHER" id="PTHR13492">
    <property type="entry name" value="RING FINGER PROTEIN 37"/>
    <property type="match status" value="1"/>
</dbReference>
<dbReference type="PANTHER" id="PTHR13492:SF2">
    <property type="entry name" value="RING FINGER PROTEIN 37"/>
    <property type="match status" value="1"/>
</dbReference>
<dbReference type="Pfam" id="PF19318">
    <property type="entry name" value="DUF5918"/>
    <property type="match status" value="1"/>
</dbReference>
<dbReference type="Pfam" id="PF04564">
    <property type="entry name" value="U-box"/>
    <property type="match status" value="1"/>
</dbReference>
<dbReference type="Pfam" id="PF14634">
    <property type="entry name" value="zf-RING_5"/>
    <property type="match status" value="1"/>
</dbReference>
<dbReference type="SMART" id="SM00504">
    <property type="entry name" value="Ubox"/>
    <property type="match status" value="1"/>
</dbReference>
<dbReference type="SUPFAM" id="SSF57850">
    <property type="entry name" value="RING/U-box"/>
    <property type="match status" value="2"/>
</dbReference>
<dbReference type="PROSITE" id="PS51698">
    <property type="entry name" value="U_BOX"/>
    <property type="match status" value="1"/>
</dbReference>
<dbReference type="PROSITE" id="PS00518">
    <property type="entry name" value="ZF_RING_1"/>
    <property type="match status" value="1"/>
</dbReference>
<dbReference type="PROSITE" id="PS50089">
    <property type="entry name" value="ZF_RING_2"/>
    <property type="match status" value="1"/>
</dbReference>